<feature type="chain" id="PRO_0000358238" description="NAD(P)H-quinone oxidoreductase subunit J, chloroplastic">
    <location>
        <begin position="1"/>
        <end position="158"/>
    </location>
</feature>
<protein>
    <recommendedName>
        <fullName evidence="1">NAD(P)H-quinone oxidoreductase subunit J, chloroplastic</fullName>
        <ecNumber evidence="1">7.1.1.-</ecNumber>
    </recommendedName>
    <alternativeName>
        <fullName>NAD(P)H dehydrogenase subunit J</fullName>
    </alternativeName>
    <alternativeName>
        <fullName evidence="1">NADH-plastoquinone oxidoreductase subunit J</fullName>
    </alternativeName>
</protein>
<dbReference type="EC" id="7.1.1.-" evidence="1"/>
<dbReference type="EMBL" id="AP009367">
    <property type="protein sequence ID" value="BAF49857.1"/>
    <property type="molecule type" value="Genomic_DNA"/>
</dbReference>
<dbReference type="RefSeq" id="YP_001123033.1">
    <property type="nucleotide sequence ID" value="NC_009266.1"/>
</dbReference>
<dbReference type="SMR" id="A4QJK2"/>
<dbReference type="GeneID" id="4962232"/>
<dbReference type="GO" id="GO:0009535">
    <property type="term" value="C:chloroplast thylakoid membrane"/>
    <property type="evidence" value="ECO:0007669"/>
    <property type="project" value="UniProtKB-SubCell"/>
</dbReference>
<dbReference type="GO" id="GO:0008137">
    <property type="term" value="F:NADH dehydrogenase (ubiquinone) activity"/>
    <property type="evidence" value="ECO:0007669"/>
    <property type="project" value="InterPro"/>
</dbReference>
<dbReference type="GO" id="GO:0048038">
    <property type="term" value="F:quinone binding"/>
    <property type="evidence" value="ECO:0007669"/>
    <property type="project" value="UniProtKB-KW"/>
</dbReference>
<dbReference type="GO" id="GO:0019684">
    <property type="term" value="P:photosynthesis, light reaction"/>
    <property type="evidence" value="ECO:0007669"/>
    <property type="project" value="UniProtKB-UniRule"/>
</dbReference>
<dbReference type="FunFam" id="3.30.460.80:FF:000004">
    <property type="entry name" value="NAD(P)H-quinone oxidoreductase subunit J, chloroplastic"/>
    <property type="match status" value="1"/>
</dbReference>
<dbReference type="Gene3D" id="3.30.460.80">
    <property type="entry name" value="NADH:ubiquinone oxidoreductase, 30kDa subunit"/>
    <property type="match status" value="1"/>
</dbReference>
<dbReference type="HAMAP" id="MF_01357">
    <property type="entry name" value="NDH1_NuoC"/>
    <property type="match status" value="1"/>
</dbReference>
<dbReference type="InterPro" id="IPR010218">
    <property type="entry name" value="NADH_DH_suC"/>
</dbReference>
<dbReference type="InterPro" id="IPR037232">
    <property type="entry name" value="NADH_quin_OxRdtase_su_C/D-like"/>
</dbReference>
<dbReference type="InterPro" id="IPR001268">
    <property type="entry name" value="NADH_UbQ_OxRdtase_30kDa_su"/>
</dbReference>
<dbReference type="InterPro" id="IPR020396">
    <property type="entry name" value="NADH_UbQ_OxRdtase_CS"/>
</dbReference>
<dbReference type="NCBIfam" id="NF009141">
    <property type="entry name" value="PRK12494.1"/>
    <property type="match status" value="1"/>
</dbReference>
<dbReference type="PANTHER" id="PTHR10884:SF14">
    <property type="entry name" value="NADH DEHYDROGENASE [UBIQUINONE] IRON-SULFUR PROTEIN 3, MITOCHONDRIAL"/>
    <property type="match status" value="1"/>
</dbReference>
<dbReference type="PANTHER" id="PTHR10884">
    <property type="entry name" value="NADH DEHYDROGENASE UBIQUINONE IRON-SULFUR PROTEIN 3"/>
    <property type="match status" value="1"/>
</dbReference>
<dbReference type="Pfam" id="PF00329">
    <property type="entry name" value="Complex1_30kDa"/>
    <property type="match status" value="1"/>
</dbReference>
<dbReference type="SUPFAM" id="SSF143243">
    <property type="entry name" value="Nqo5-like"/>
    <property type="match status" value="1"/>
</dbReference>
<dbReference type="PROSITE" id="PS00542">
    <property type="entry name" value="COMPLEX1_30K"/>
    <property type="match status" value="1"/>
</dbReference>
<evidence type="ECO:0000255" key="1">
    <source>
        <dbReference type="HAMAP-Rule" id="MF_01357"/>
    </source>
</evidence>
<gene>
    <name evidence="1" type="primary">ndhJ</name>
</gene>
<organism>
    <name type="scientific">Aethionema grandiflorum</name>
    <name type="common">Persian stone-cress</name>
    <dbReference type="NCBI Taxonomy" id="72657"/>
    <lineage>
        <taxon>Eukaryota</taxon>
        <taxon>Viridiplantae</taxon>
        <taxon>Streptophyta</taxon>
        <taxon>Embryophyta</taxon>
        <taxon>Tracheophyta</taxon>
        <taxon>Spermatophyta</taxon>
        <taxon>Magnoliopsida</taxon>
        <taxon>eudicotyledons</taxon>
        <taxon>Gunneridae</taxon>
        <taxon>Pentapetalae</taxon>
        <taxon>rosids</taxon>
        <taxon>malvids</taxon>
        <taxon>Brassicales</taxon>
        <taxon>Brassicaceae</taxon>
        <taxon>Aethionemeae</taxon>
        <taxon>Aethionema</taxon>
    </lineage>
</organism>
<geneLocation type="chloroplast"/>
<accession>A4QJK2</accession>
<keyword id="KW-0150">Chloroplast</keyword>
<keyword id="KW-0472">Membrane</keyword>
<keyword id="KW-0520">NAD</keyword>
<keyword id="KW-0521">NADP</keyword>
<keyword id="KW-0934">Plastid</keyword>
<keyword id="KW-0618">Plastoquinone</keyword>
<keyword id="KW-0874">Quinone</keyword>
<keyword id="KW-0793">Thylakoid</keyword>
<keyword id="KW-1278">Translocase</keyword>
<keyword id="KW-0813">Transport</keyword>
<proteinExistence type="inferred from homology"/>
<reference key="1">
    <citation type="submission" date="2007-03" db="EMBL/GenBank/DDBJ databases">
        <title>Sequencing analysis of Aethionema grandiflorum chloroplast DNA.</title>
        <authorList>
            <person name="Hosouchi T."/>
            <person name="Tsuruoka H."/>
            <person name="Kotani H."/>
        </authorList>
    </citation>
    <scope>NUCLEOTIDE SEQUENCE [LARGE SCALE GENOMIC DNA]</scope>
</reference>
<name>NDHJ_AETGR</name>
<comment type="function">
    <text evidence="1">NDH shuttles electrons from NAD(P)H:plastoquinone, via FMN and iron-sulfur (Fe-S) centers, to quinones in the photosynthetic chain and possibly in a chloroplast respiratory chain. The immediate electron acceptor for the enzyme in this species is believed to be plastoquinone. Couples the redox reaction to proton translocation, and thus conserves the redox energy in a proton gradient.</text>
</comment>
<comment type="catalytic activity">
    <reaction evidence="1">
        <text>a plastoquinone + NADH + (n+1) H(+)(in) = a plastoquinol + NAD(+) + n H(+)(out)</text>
        <dbReference type="Rhea" id="RHEA:42608"/>
        <dbReference type="Rhea" id="RHEA-COMP:9561"/>
        <dbReference type="Rhea" id="RHEA-COMP:9562"/>
        <dbReference type="ChEBI" id="CHEBI:15378"/>
        <dbReference type="ChEBI" id="CHEBI:17757"/>
        <dbReference type="ChEBI" id="CHEBI:57540"/>
        <dbReference type="ChEBI" id="CHEBI:57945"/>
        <dbReference type="ChEBI" id="CHEBI:62192"/>
    </reaction>
</comment>
<comment type="catalytic activity">
    <reaction evidence="1">
        <text>a plastoquinone + NADPH + (n+1) H(+)(in) = a plastoquinol + NADP(+) + n H(+)(out)</text>
        <dbReference type="Rhea" id="RHEA:42612"/>
        <dbReference type="Rhea" id="RHEA-COMP:9561"/>
        <dbReference type="Rhea" id="RHEA-COMP:9562"/>
        <dbReference type="ChEBI" id="CHEBI:15378"/>
        <dbReference type="ChEBI" id="CHEBI:17757"/>
        <dbReference type="ChEBI" id="CHEBI:57783"/>
        <dbReference type="ChEBI" id="CHEBI:58349"/>
        <dbReference type="ChEBI" id="CHEBI:62192"/>
    </reaction>
</comment>
<comment type="subunit">
    <text evidence="1">NDH is composed of at least 16 different subunits, 5 of which are encoded in the nucleus.</text>
</comment>
<comment type="subcellular location">
    <subcellularLocation>
        <location evidence="1">Plastid</location>
        <location evidence="1">Chloroplast thylakoid membrane</location>
        <topology evidence="1">Peripheral membrane protein</topology>
        <orientation evidence="1">Stromal side</orientation>
    </subcellularLocation>
</comment>
<comment type="similarity">
    <text evidence="1">Belongs to the complex I 30 kDa subunit family.</text>
</comment>
<sequence length="158" mass="18548">MQGTLSVWLAKRGLVHRSLGFDYQGIETLQIKPEDWHSIAVILYVYGYNYLRSQCAYDVAPGGLLASVYHLTRIEYGVNQAEEVCIKVFTHRSNSRIPSVFWVWKSTDFQERESYDMLGITYDSHPRLKRILMPESWIGWPLRKDYIAPNFYEIQDAY</sequence>